<keyword id="KW-0012">Acyltransferase</keyword>
<keyword id="KW-0441">Lipid A biosynthesis</keyword>
<keyword id="KW-0444">Lipid biosynthesis</keyword>
<keyword id="KW-0443">Lipid metabolism</keyword>
<keyword id="KW-0677">Repeat</keyword>
<keyword id="KW-0808">Transferase</keyword>
<protein>
    <recommendedName>
        <fullName evidence="1">UDP-3-O-acylglucosamine N-acyltransferase</fullName>
        <ecNumber evidence="1">2.3.1.191</ecNumber>
    </recommendedName>
</protein>
<reference key="1">
    <citation type="journal article" date="2005" name="PLoS Biol.">
        <title>Major structural differences and novel potential virulence mechanisms from the genomes of multiple Campylobacter species.</title>
        <authorList>
            <person name="Fouts D.E."/>
            <person name="Mongodin E.F."/>
            <person name="Mandrell R.E."/>
            <person name="Miller W.G."/>
            <person name="Rasko D.A."/>
            <person name="Ravel J."/>
            <person name="Brinkac L.M."/>
            <person name="DeBoy R.T."/>
            <person name="Parker C.T."/>
            <person name="Daugherty S.C."/>
            <person name="Dodson R.J."/>
            <person name="Durkin A.S."/>
            <person name="Madupu R."/>
            <person name="Sullivan S.A."/>
            <person name="Shetty J.U."/>
            <person name="Ayodeji M.A."/>
            <person name="Shvartsbeyn A."/>
            <person name="Schatz M.C."/>
            <person name="Badger J.H."/>
            <person name="Fraser C.M."/>
            <person name="Nelson K.E."/>
        </authorList>
    </citation>
    <scope>NUCLEOTIDE SEQUENCE [LARGE SCALE GENOMIC DNA]</scope>
    <source>
        <strain>RM1221</strain>
    </source>
</reference>
<accession>Q5HVJ4</accession>
<feature type="chain" id="PRO_0000264355" description="UDP-3-O-acylglucosamine N-acyltransferase">
    <location>
        <begin position="1"/>
        <end position="321"/>
    </location>
</feature>
<feature type="active site" description="Proton acceptor" evidence="1">
    <location>
        <position position="231"/>
    </location>
</feature>
<organism>
    <name type="scientific">Campylobacter jejuni (strain RM1221)</name>
    <dbReference type="NCBI Taxonomy" id="195099"/>
    <lineage>
        <taxon>Bacteria</taxon>
        <taxon>Pseudomonadati</taxon>
        <taxon>Campylobacterota</taxon>
        <taxon>Epsilonproteobacteria</taxon>
        <taxon>Campylobacterales</taxon>
        <taxon>Campylobacteraceae</taxon>
        <taxon>Campylobacter</taxon>
    </lineage>
</organism>
<gene>
    <name evidence="1" type="primary">lpxD</name>
    <name type="ordered locus">CJE0679</name>
</gene>
<comment type="function">
    <text evidence="1">Catalyzes the N-acylation of UDP-3-O-acylglucosamine using 3-hydroxyacyl-ACP as the acyl donor. Is involved in the biosynthesis of lipid A, a phosphorylated glycolipid that anchors the lipopolysaccharide to the outer membrane of the cell.</text>
</comment>
<comment type="catalytic activity">
    <reaction evidence="1">
        <text>a UDP-3-O-[(3R)-3-hydroxyacyl]-alpha-D-glucosamine + a (3R)-hydroxyacyl-[ACP] = a UDP-2-N,3-O-bis[(3R)-3-hydroxyacyl]-alpha-D-glucosamine + holo-[ACP] + H(+)</text>
        <dbReference type="Rhea" id="RHEA:53836"/>
        <dbReference type="Rhea" id="RHEA-COMP:9685"/>
        <dbReference type="Rhea" id="RHEA-COMP:9945"/>
        <dbReference type="ChEBI" id="CHEBI:15378"/>
        <dbReference type="ChEBI" id="CHEBI:64479"/>
        <dbReference type="ChEBI" id="CHEBI:78827"/>
        <dbReference type="ChEBI" id="CHEBI:137740"/>
        <dbReference type="ChEBI" id="CHEBI:137748"/>
        <dbReference type="EC" id="2.3.1.191"/>
    </reaction>
</comment>
<comment type="pathway">
    <text evidence="1">Bacterial outer membrane biogenesis; LPS lipid A biosynthesis.</text>
</comment>
<comment type="subunit">
    <text evidence="1">Homotrimer.</text>
</comment>
<comment type="similarity">
    <text evidence="1">Belongs to the transferase hexapeptide repeat family. LpxD subfamily.</text>
</comment>
<evidence type="ECO:0000255" key="1">
    <source>
        <dbReference type="HAMAP-Rule" id="MF_00523"/>
    </source>
</evidence>
<dbReference type="EC" id="2.3.1.191" evidence="1"/>
<dbReference type="EMBL" id="CP000025">
    <property type="protein sequence ID" value="AAW35811.1"/>
    <property type="molecule type" value="Genomic_DNA"/>
</dbReference>
<dbReference type="RefSeq" id="WP_002852180.1">
    <property type="nucleotide sequence ID" value="NC_003912.7"/>
</dbReference>
<dbReference type="SMR" id="Q5HVJ4"/>
<dbReference type="KEGG" id="cjr:CJE0679"/>
<dbReference type="HOGENOM" id="CLU_049865_0_0_7"/>
<dbReference type="UniPathway" id="UPA00973"/>
<dbReference type="GO" id="GO:0016020">
    <property type="term" value="C:membrane"/>
    <property type="evidence" value="ECO:0007669"/>
    <property type="project" value="GOC"/>
</dbReference>
<dbReference type="GO" id="GO:0016410">
    <property type="term" value="F:N-acyltransferase activity"/>
    <property type="evidence" value="ECO:0007669"/>
    <property type="project" value="InterPro"/>
</dbReference>
<dbReference type="GO" id="GO:0009245">
    <property type="term" value="P:lipid A biosynthetic process"/>
    <property type="evidence" value="ECO:0007669"/>
    <property type="project" value="UniProtKB-UniRule"/>
</dbReference>
<dbReference type="CDD" id="cd03352">
    <property type="entry name" value="LbH_LpxD"/>
    <property type="match status" value="1"/>
</dbReference>
<dbReference type="Gene3D" id="2.160.10.10">
    <property type="entry name" value="Hexapeptide repeat proteins"/>
    <property type="match status" value="1"/>
</dbReference>
<dbReference type="Gene3D" id="3.40.1390.10">
    <property type="entry name" value="MurE/MurF, N-terminal domain"/>
    <property type="match status" value="1"/>
</dbReference>
<dbReference type="HAMAP" id="MF_00523">
    <property type="entry name" value="LpxD"/>
    <property type="match status" value="1"/>
</dbReference>
<dbReference type="InterPro" id="IPR001451">
    <property type="entry name" value="Hexapep"/>
</dbReference>
<dbReference type="InterPro" id="IPR018357">
    <property type="entry name" value="Hexapep_transf_CS"/>
</dbReference>
<dbReference type="InterPro" id="IPR007691">
    <property type="entry name" value="LpxD"/>
</dbReference>
<dbReference type="InterPro" id="IPR011004">
    <property type="entry name" value="Trimer_LpxA-like_sf"/>
</dbReference>
<dbReference type="InterPro" id="IPR020573">
    <property type="entry name" value="UDP_GlcNAc_AcTrfase_non-rep"/>
</dbReference>
<dbReference type="NCBIfam" id="TIGR01853">
    <property type="entry name" value="lipid_A_lpxD"/>
    <property type="match status" value="1"/>
</dbReference>
<dbReference type="NCBIfam" id="NF002060">
    <property type="entry name" value="PRK00892.1"/>
    <property type="match status" value="1"/>
</dbReference>
<dbReference type="PANTHER" id="PTHR43378">
    <property type="entry name" value="UDP-3-O-ACYLGLUCOSAMINE N-ACYLTRANSFERASE"/>
    <property type="match status" value="1"/>
</dbReference>
<dbReference type="PANTHER" id="PTHR43378:SF2">
    <property type="entry name" value="UDP-3-O-ACYLGLUCOSAMINE N-ACYLTRANSFERASE 1, MITOCHONDRIAL-RELATED"/>
    <property type="match status" value="1"/>
</dbReference>
<dbReference type="Pfam" id="PF00132">
    <property type="entry name" value="Hexapep"/>
    <property type="match status" value="1"/>
</dbReference>
<dbReference type="Pfam" id="PF14602">
    <property type="entry name" value="Hexapep_2"/>
    <property type="match status" value="1"/>
</dbReference>
<dbReference type="Pfam" id="PF04613">
    <property type="entry name" value="LpxD"/>
    <property type="match status" value="1"/>
</dbReference>
<dbReference type="SUPFAM" id="SSF51161">
    <property type="entry name" value="Trimeric LpxA-like enzymes"/>
    <property type="match status" value="1"/>
</dbReference>
<dbReference type="PROSITE" id="PS00101">
    <property type="entry name" value="HEXAPEP_TRANSFERASES"/>
    <property type="match status" value="1"/>
</dbReference>
<proteinExistence type="inferred from homology"/>
<name>LPXD_CAMJR</name>
<sequence>MKLSEIAEFLSLEYKGEDIEISALNSLLKANFTELTYCDGEKNTKDIPHTGAAAILVSKEYENLVPKDTKALITQSPHLSFAFLSKLFAKPLISTAKEKVQNIAKSARIMPNVYIGDNVNIGENVIIMAGAYIGDNVSIGDESIIHPNVVIYNDTKIGKKCHLLANCVIGSDGFGYAHNKNGEHYKIYHNGNVVLEDFVEVGACTTIDRAVFDSTIIKAGTKVDNLVQIGHNCNIGQNCIIVAQTGISGSSELGRNVIMGGQSATSGHLKIGDFSTIAARGGVSKNLEGGRVYGGFPIMLQKDWLKLQAKIAINFKEKSQD</sequence>